<comment type="function">
    <text evidence="4 10">E3 ubiquitin-protein ligase which accepts ubiquitin from specific E2 ubiquitin-conjugating enzymes, and transfers it to substrates, generally promoting their degradation by the proteasome. Negatively regulates TCR (T-cell receptor), BCR (B-cell receptor) and FCER1 (high affinity immunoglobulin epsilon receptor) signal transduction pathways. In naive T-cells, inhibits VAV1 activation upon TCR engagement and imposes a requirement for CD28 costimulation for proliferation and IL-2 production. Also acts by promoting PIK3R1/p85 ubiquitination, which impairs its recruitment to the TCR and subsequent activation. In activated T-cells, inhibits PLCG1 activation and calcium mobilization upon restimulation and promotes anergy. In B-cells, acts by ubiquitinating SYK and promoting its proteasomal degradation. Slightly promotes SRC ubiquitination. May be involved in EGFR ubiquitination and internalization. May be functionally coupled with the E2 ubiquitin-protein ligase UB2D3. In association with CBL, required for proper feedback inhibition of ciliary platelet-derived growth factor receptor-alpha (PDGFRA) signaling pathway via ubiquitination and internalization of PDGFRA (By similarity).</text>
</comment>
<comment type="catalytic activity">
    <reaction evidence="3">
        <text>S-ubiquitinyl-[E2 ubiquitin-conjugating enzyme]-L-cysteine + [acceptor protein]-L-lysine = [E2 ubiquitin-conjugating enzyme]-L-cysteine + N(6)-ubiquitinyl-[acceptor protein]-L-lysine.</text>
        <dbReference type="EC" id="2.3.2.27"/>
    </reaction>
</comment>
<comment type="pathway">
    <text>Protein modification; protein ubiquitination.</text>
</comment>
<comment type="subunit">
    <text evidence="3">Interacts with SH3 domain-containing proteins LCK, CRK and SORBS1. Interacts with LCP2 and ZAP70. Interacts with CBL. Interacts with SH3 domain-containing proteins VAV1, FYN, FGR, PLCG1, GRB2, CRKL, PIK3R1 and SH3KBP1/CIN85. Identified in heterotrimeric complexes with SH3KBP1/CIN85, CD2AP and ARHGEF7, where one CBLB peptide binds two copies of the other protein. Interacts with poly-ubiquitinated proteins. Dimerization is required for the binding of poly-ubiquitin, but not for the binding of mono-ubiquitin. Interacts with EGFR (phosphorylated). Interacts with IFT20.</text>
</comment>
<comment type="subcellular location">
    <subcellularLocation>
        <location evidence="10">Cytoplasm</location>
    </subcellularLocation>
    <text>In mast cells, translocates to lipid raft upon FCER1 engagement.</text>
</comment>
<comment type="domain">
    <text>The N-terminus is composed of the phosphotyrosine binding (PTB) domain, a short linker region and the RING-type zinc finger. The PTB domain, which is also called TKB (tyrosine kinase binding) domain, is composed of three different subdomains: a four-helix bundle (4H), a calcium-binding EF hand and a divergent SH2 domain.</text>
</comment>
<comment type="domain">
    <text>The RING-type zinc finger domain mediates binding to an E2 ubiquitin-conjugating enzyme.</text>
</comment>
<comment type="domain">
    <text evidence="3">The UBA domain interacts with poly-ubiquitinated proteins.</text>
</comment>
<comment type="PTM">
    <text evidence="3">Phosphorylated on tyrosine and serine residues upon TCR or BCR activation, and upon various types of cell stimulation.</text>
</comment>
<comment type="PTM">
    <text evidence="3">Auto-ubiquitinated upon EGF-mediated cell activation or upon T-cell costimulation by CD28; which promotes proteasomal degradation.</text>
</comment>
<comment type="disease">
    <text evidence="9">Lack of Cblb expression is the cause of the Komeda diabetes-prone (KDP) phenotype, characterized by autoimmune destruction of pancreatic beta cells and rapid onset of overt diabetes with no sex difference and no significant T-cell lymphopenia. The KPD rat is a spontaneous animal model for human type 1 diabetes mellitus.</text>
</comment>
<comment type="miscellaneous">
    <text evidence="1">This protein has one functional calcium-binding site.</text>
</comment>
<reference key="1">
    <citation type="journal article" date="2002" name="Nat. Genet.">
        <title>Cblb is a major susceptibility gene for rat type 1 diabetes mellitus.</title>
        <authorList>
            <person name="Yokoi N."/>
            <person name="Komeda K."/>
            <person name="Wang H.-Y."/>
            <person name="Yano H."/>
            <person name="Kitada K."/>
            <person name="Saitoh Y."/>
            <person name="Seino Y."/>
            <person name="Yasuda K."/>
            <person name="Serikawa T."/>
            <person name="Seino S."/>
        </authorList>
    </citation>
    <scope>NUCLEOTIDE SEQUENCE [MRNA]</scope>
    <scope>DISEASE</scope>
    <source>
        <tissue>Spleen</tissue>
    </source>
</reference>
<reference key="2">
    <citation type="submission" date="1999-10" db="EMBL/GenBank/DDBJ databases">
        <title>Identification of cbl-b as a putative binding partner of SH3 domains of erythroid and non-erythroid alpha-spectrin (alpha-fodrin).</title>
        <authorList>
            <person name="Nicolas G."/>
            <person name="Galand C."/>
            <person name="Lecomte M.-C."/>
        </authorList>
    </citation>
    <scope>NUCLEOTIDE SEQUENCE [MRNA] OF 738-938</scope>
    <source>
        <strain>Sprague-Dawley</strain>
        <tissue>Kidney</tissue>
    </source>
</reference>
<reference key="3">
    <citation type="journal article" date="2004" name="Blood">
        <title>Negative regulation of FcepsilonRI-mediated mast cell activation by a ubiquitin-protein ligase Cbl-b.</title>
        <authorList>
            <person name="Qu X."/>
            <person name="Sada K."/>
            <person name="Kyo S."/>
            <person name="Maeno K."/>
            <person name="Miah S.M."/>
            <person name="Yamamura H."/>
        </authorList>
    </citation>
    <scope>FUNCTION</scope>
    <scope>SUBCELLULAR LOCATION</scope>
</reference>
<reference key="4">
    <citation type="journal article" date="2006" name="Proc. Natl. Acad. Sci. U.S.A.">
        <title>Quantitative phosphoproteomics of vasopressin-sensitive renal cells: regulation of aquaporin-2 phosphorylation at two sites.</title>
        <authorList>
            <person name="Hoffert J.D."/>
            <person name="Pisitkun T."/>
            <person name="Wang G."/>
            <person name="Shen R.-F."/>
            <person name="Knepper M.A."/>
        </authorList>
    </citation>
    <scope>PHOSPHORYLATION [LARGE SCALE ANALYSIS] AT SER-633</scope>
    <scope>IDENTIFICATION BY MASS SPECTROMETRY [LARGE SCALE ANALYSIS]</scope>
</reference>
<reference key="5">
    <citation type="journal article" date="2012" name="Nat. Commun.">
        <title>Quantitative maps of protein phosphorylation sites across 14 different rat organs and tissues.</title>
        <authorList>
            <person name="Lundby A."/>
            <person name="Secher A."/>
            <person name="Lage K."/>
            <person name="Nordsborg N.B."/>
            <person name="Dmytriyev A."/>
            <person name="Lundby C."/>
            <person name="Olsen J.V."/>
        </authorList>
    </citation>
    <scope>PHOSPHORYLATION [LARGE SCALE ANALYSIS] AT SER-476</scope>
    <scope>IDENTIFICATION BY MASS SPECTROMETRY [LARGE SCALE ANALYSIS]</scope>
</reference>
<accession>Q8K4S7</accession>
<accession>Q9QZ69</accession>
<sequence length="938" mass="104652">MANSMNGRNPGGRGGNPRKGRILGIIDAIQDAVGPPKQAAADRRTVEKTWKLMDKVVRLCQNPKLQLKNSPPYILDILPDTYQHLRLILSKYDDNQKLAQLSENEYFKIYIDSLMKKSKRAIRLFKEGKERMYEEQSQDRRNLTKLSLIFSHMLAEIKAIFPNGQFQGDNFRITKADAAEFWRKFFGDKTIVPWKVFRQCLHEVHQISSGLEAMALKSTIDLTCNDYISVFEFDIFTRLFQPWGSILRNWNFLAVTHPGYMAFLTYDEVKARLQKYSTKPGSYIFRLSCTRLGQWAIGYVTGDGNILQTIPHNKPLFQALIDGSREGFYLYPDGRSYNPDLTGLCEPTPHDHIKVTQEQYELYCEMGSTFQLCKICAENDKDVKIEPCGHLMCTSCLTAWQESDGQGCPFCRCEIKGTEPIIVDPFDPRDEGSRCCSIIDPFSIPMLDLDDDDDREESLMMNRLASVRKCTDRQNSPVTSPGSSPLAQRRKPQPDPLQIPHLSLPPVPPRLDLIQKGIVRSPCGSPTGSPKSSPCMVRKQDKPLPAPPPPLRDPPPPPERPPPIPPDSRLSRHFHHGESVPSRDQPMPLEAWCPRDAFGTNQVMGCRILGDGSPKPGVTANSNLNGRHSRMGSDQVLMRKHRRHDLPSEGAKVFSNGHLAPEEYDVPPRLSPPPPVTALLPSIKCTGPIANCLSEKTRDTVEEDDDEYKIPSSHPVSLNSQPSHCHNVKPPVRSCDNGHCILNGTHGTPSEMKKSNIPDLGIYLKGEDAFDALPPSLPPPPPPARHSLIEHSKPPGSSSRPSSGQDLFLLPSDPFFDPASGQVPLPPARRAPGDGVKSNRASQDYDQLPSSSDGSQAPARPPKPRPRRTAPEIHHRKPHGPEAALENVDAKIAKLMGEGYAFEEVKRALEIAQNNLEVARSILREFAFPPPVSPRLNL</sequence>
<evidence type="ECO:0000250" key="1"/>
<evidence type="ECO:0000250" key="2">
    <source>
        <dbReference type="UniProtKB" id="P22681"/>
    </source>
</evidence>
<evidence type="ECO:0000250" key="3">
    <source>
        <dbReference type="UniProtKB" id="Q13191"/>
    </source>
</evidence>
<evidence type="ECO:0000250" key="4">
    <source>
        <dbReference type="UniProtKB" id="Q3TTA7"/>
    </source>
</evidence>
<evidence type="ECO:0000255" key="5">
    <source>
        <dbReference type="PROSITE-ProRule" id="PRU00175"/>
    </source>
</evidence>
<evidence type="ECO:0000255" key="6">
    <source>
        <dbReference type="PROSITE-ProRule" id="PRU00212"/>
    </source>
</evidence>
<evidence type="ECO:0000255" key="7">
    <source>
        <dbReference type="PROSITE-ProRule" id="PRU00839"/>
    </source>
</evidence>
<evidence type="ECO:0000256" key="8">
    <source>
        <dbReference type="SAM" id="MobiDB-lite"/>
    </source>
</evidence>
<evidence type="ECO:0000269" key="9">
    <source>
    </source>
</evidence>
<evidence type="ECO:0000269" key="10">
    <source>
    </source>
</evidence>
<evidence type="ECO:0000305" key="11"/>
<evidence type="ECO:0007744" key="12">
    <source>
    </source>
</evidence>
<evidence type="ECO:0007744" key="13">
    <source>
    </source>
</evidence>
<name>CBLB_RAT</name>
<gene>
    <name type="primary">Cblb</name>
</gene>
<organism>
    <name type="scientific">Rattus norvegicus</name>
    <name type="common">Rat</name>
    <dbReference type="NCBI Taxonomy" id="10116"/>
    <lineage>
        <taxon>Eukaryota</taxon>
        <taxon>Metazoa</taxon>
        <taxon>Chordata</taxon>
        <taxon>Craniata</taxon>
        <taxon>Vertebrata</taxon>
        <taxon>Euteleostomi</taxon>
        <taxon>Mammalia</taxon>
        <taxon>Eutheria</taxon>
        <taxon>Euarchontoglires</taxon>
        <taxon>Glires</taxon>
        <taxon>Rodentia</taxon>
        <taxon>Myomorpha</taxon>
        <taxon>Muroidea</taxon>
        <taxon>Muridae</taxon>
        <taxon>Murinae</taxon>
        <taxon>Rattus</taxon>
    </lineage>
</organism>
<dbReference type="EC" id="2.3.2.27" evidence="3"/>
<dbReference type="EMBL" id="AB071283">
    <property type="protein sequence ID" value="BAC05498.1"/>
    <property type="molecule type" value="mRNA"/>
</dbReference>
<dbReference type="EMBL" id="AF199504">
    <property type="protein sequence ID" value="AAF13271.1"/>
    <property type="molecule type" value="mRNA"/>
</dbReference>
<dbReference type="RefSeq" id="NP_598285.1">
    <property type="nucleotide sequence ID" value="NM_133601.1"/>
</dbReference>
<dbReference type="BMRB" id="Q8K4S7"/>
<dbReference type="SMR" id="Q8K4S7"/>
<dbReference type="FunCoup" id="Q8K4S7">
    <property type="interactions" value="3513"/>
</dbReference>
<dbReference type="IntAct" id="Q8K4S7">
    <property type="interactions" value="6"/>
</dbReference>
<dbReference type="MINT" id="Q8K4S7"/>
<dbReference type="STRING" id="10116.ENSRNOP00000074638"/>
<dbReference type="iPTMnet" id="Q8K4S7"/>
<dbReference type="PhosphoSitePlus" id="Q8K4S7"/>
<dbReference type="jPOST" id="Q8K4S7"/>
<dbReference type="PaxDb" id="10116-ENSRNOP00000002719"/>
<dbReference type="GeneID" id="171136"/>
<dbReference type="KEGG" id="rno:171136"/>
<dbReference type="UCSC" id="RGD:620535">
    <property type="organism name" value="rat"/>
</dbReference>
<dbReference type="AGR" id="RGD:620535"/>
<dbReference type="CTD" id="868"/>
<dbReference type="RGD" id="620535">
    <property type="gene designation" value="Cblb"/>
</dbReference>
<dbReference type="eggNOG" id="KOG1785">
    <property type="taxonomic scope" value="Eukaryota"/>
</dbReference>
<dbReference type="InParanoid" id="Q8K4S7"/>
<dbReference type="OrthoDB" id="7237699at2759"/>
<dbReference type="Reactome" id="R-RNO-983168">
    <property type="pathway name" value="Antigen processing: Ubiquitination &amp; Proteasome degradation"/>
</dbReference>
<dbReference type="UniPathway" id="UPA00143"/>
<dbReference type="PRO" id="PR:Q8K4S7"/>
<dbReference type="Proteomes" id="UP000002494">
    <property type="component" value="Unplaced"/>
</dbReference>
<dbReference type="GO" id="GO:0005737">
    <property type="term" value="C:cytoplasm"/>
    <property type="evidence" value="ECO:0007669"/>
    <property type="project" value="UniProtKB-SubCell"/>
</dbReference>
<dbReference type="GO" id="GO:0098978">
    <property type="term" value="C:glutamatergic synapse"/>
    <property type="evidence" value="ECO:0000266"/>
    <property type="project" value="RGD"/>
</dbReference>
<dbReference type="GO" id="GO:0045121">
    <property type="term" value="C:membrane raft"/>
    <property type="evidence" value="ECO:0000318"/>
    <property type="project" value="GO_Central"/>
</dbReference>
<dbReference type="GO" id="GO:0005886">
    <property type="term" value="C:plasma membrane"/>
    <property type="evidence" value="ECO:0000318"/>
    <property type="project" value="GO_Central"/>
</dbReference>
<dbReference type="GO" id="GO:0098794">
    <property type="term" value="C:postsynapse"/>
    <property type="evidence" value="ECO:0000266"/>
    <property type="project" value="RGD"/>
</dbReference>
<dbReference type="GO" id="GO:0005509">
    <property type="term" value="F:calcium ion binding"/>
    <property type="evidence" value="ECO:0007669"/>
    <property type="project" value="InterPro"/>
</dbReference>
<dbReference type="GO" id="GO:0001784">
    <property type="term" value="F:phosphotyrosine residue binding"/>
    <property type="evidence" value="ECO:0007669"/>
    <property type="project" value="InterPro"/>
</dbReference>
<dbReference type="GO" id="GO:0019901">
    <property type="term" value="F:protein kinase binding"/>
    <property type="evidence" value="ECO:0000353"/>
    <property type="project" value="RGD"/>
</dbReference>
<dbReference type="GO" id="GO:0030971">
    <property type="term" value="F:receptor tyrosine kinase binding"/>
    <property type="evidence" value="ECO:0000318"/>
    <property type="project" value="GO_Central"/>
</dbReference>
<dbReference type="GO" id="GO:0061630">
    <property type="term" value="F:ubiquitin protein ligase activity"/>
    <property type="evidence" value="ECO:0000318"/>
    <property type="project" value="GO_Central"/>
</dbReference>
<dbReference type="GO" id="GO:0008270">
    <property type="term" value="F:zinc ion binding"/>
    <property type="evidence" value="ECO:0007669"/>
    <property type="project" value="UniProtKB-KW"/>
</dbReference>
<dbReference type="GO" id="GO:0035739">
    <property type="term" value="P:CD4-positive, alpha-beta T cell proliferation"/>
    <property type="evidence" value="ECO:0000266"/>
    <property type="project" value="RGD"/>
</dbReference>
<dbReference type="GO" id="GO:0070301">
    <property type="term" value="P:cellular response to hydrogen peroxide"/>
    <property type="evidence" value="ECO:0000270"/>
    <property type="project" value="RGD"/>
</dbReference>
<dbReference type="GO" id="GO:0006955">
    <property type="term" value="P:immune response"/>
    <property type="evidence" value="ECO:0000266"/>
    <property type="project" value="RGD"/>
</dbReference>
<dbReference type="GO" id="GO:0035556">
    <property type="term" value="P:intracellular signal transduction"/>
    <property type="evidence" value="ECO:0000266"/>
    <property type="project" value="RGD"/>
</dbReference>
<dbReference type="GO" id="GO:0043066">
    <property type="term" value="P:negative regulation of apoptotic process"/>
    <property type="evidence" value="ECO:0000315"/>
    <property type="project" value="RGD"/>
</dbReference>
<dbReference type="GO" id="GO:2000562">
    <property type="term" value="P:negative regulation of CD4-positive, alpha-beta T cell proliferation"/>
    <property type="evidence" value="ECO:0000266"/>
    <property type="project" value="RGD"/>
</dbReference>
<dbReference type="GO" id="GO:0042059">
    <property type="term" value="P:negative regulation of epidermal growth factor receptor signaling pathway"/>
    <property type="evidence" value="ECO:0000318"/>
    <property type="project" value="GO_Central"/>
</dbReference>
<dbReference type="GO" id="GO:0050860">
    <property type="term" value="P:negative regulation of T cell receptor signaling pathway"/>
    <property type="evidence" value="ECO:0000266"/>
    <property type="project" value="RGD"/>
</dbReference>
<dbReference type="GO" id="GO:0045732">
    <property type="term" value="P:positive regulation of protein catabolic process"/>
    <property type="evidence" value="ECO:0000266"/>
    <property type="project" value="RGD"/>
</dbReference>
<dbReference type="GO" id="GO:0031398">
    <property type="term" value="P:positive regulation of protein ubiquitination"/>
    <property type="evidence" value="ECO:0000266"/>
    <property type="project" value="RGD"/>
</dbReference>
<dbReference type="GO" id="GO:0002669">
    <property type="term" value="P:positive regulation of T cell anergy"/>
    <property type="evidence" value="ECO:0000266"/>
    <property type="project" value="RGD"/>
</dbReference>
<dbReference type="GO" id="GO:0030163">
    <property type="term" value="P:protein catabolic process"/>
    <property type="evidence" value="ECO:0000266"/>
    <property type="project" value="RGD"/>
</dbReference>
<dbReference type="GO" id="GO:0016567">
    <property type="term" value="P:protein ubiquitination"/>
    <property type="evidence" value="ECO:0007669"/>
    <property type="project" value="UniProtKB-UniPathway"/>
</dbReference>
<dbReference type="GO" id="GO:0030155">
    <property type="term" value="P:regulation of cell adhesion"/>
    <property type="evidence" value="ECO:0000266"/>
    <property type="project" value="RGD"/>
</dbReference>
<dbReference type="GO" id="GO:2000583">
    <property type="term" value="P:regulation of platelet-derived growth factor receptor-alpha signaling pathway"/>
    <property type="evidence" value="ECO:0000250"/>
    <property type="project" value="UniProtKB"/>
</dbReference>
<dbReference type="GO" id="GO:0099149">
    <property type="term" value="P:regulation of postsynaptic neurotransmitter receptor internalization"/>
    <property type="evidence" value="ECO:0000266"/>
    <property type="project" value="RGD"/>
</dbReference>
<dbReference type="GO" id="GO:0140252">
    <property type="term" value="P:regulation protein catabolic process at postsynapse"/>
    <property type="evidence" value="ECO:0000266"/>
    <property type="project" value="RGD"/>
</dbReference>
<dbReference type="GO" id="GO:0009629">
    <property type="term" value="P:response to gravity"/>
    <property type="evidence" value="ECO:0000270"/>
    <property type="project" value="RGD"/>
</dbReference>
<dbReference type="GO" id="GO:0009725">
    <property type="term" value="P:response to hormone"/>
    <property type="evidence" value="ECO:0000270"/>
    <property type="project" value="RGD"/>
</dbReference>
<dbReference type="GO" id="GO:0007165">
    <property type="term" value="P:signal transduction"/>
    <property type="evidence" value="ECO:0000318"/>
    <property type="project" value="GO_Central"/>
</dbReference>
<dbReference type="GO" id="GO:0042110">
    <property type="term" value="P:T cell activation"/>
    <property type="evidence" value="ECO:0000266"/>
    <property type="project" value="RGD"/>
</dbReference>
<dbReference type="GO" id="GO:0002870">
    <property type="term" value="P:T cell anergy"/>
    <property type="evidence" value="ECO:0000266"/>
    <property type="project" value="RGD"/>
</dbReference>
<dbReference type="GO" id="GO:0050852">
    <property type="term" value="P:T cell receptor signaling pathway"/>
    <property type="evidence" value="ECO:0000266"/>
    <property type="project" value="RGD"/>
</dbReference>
<dbReference type="CDD" id="cd16709">
    <property type="entry name" value="RING-HC_Cbl-b"/>
    <property type="match status" value="1"/>
</dbReference>
<dbReference type="CDD" id="cd09920">
    <property type="entry name" value="SH2_Cbl-b_TKB"/>
    <property type="match status" value="1"/>
</dbReference>
<dbReference type="CDD" id="cd14392">
    <property type="entry name" value="UBA_Cbl-b"/>
    <property type="match status" value="1"/>
</dbReference>
<dbReference type="FunFam" id="1.10.238.10:FF:000022">
    <property type="entry name" value="E3 ubiquitin-protein ligase CBL"/>
    <property type="match status" value="1"/>
</dbReference>
<dbReference type="FunFam" id="1.20.930.20:FF:000001">
    <property type="entry name" value="E3 ubiquitin-protein ligase CBL"/>
    <property type="match status" value="1"/>
</dbReference>
<dbReference type="FunFam" id="3.30.40.10:FF:000015">
    <property type="entry name" value="E3 ubiquitin-protein ligase CBL"/>
    <property type="match status" value="1"/>
</dbReference>
<dbReference type="FunFam" id="3.30.505.10:FF:000154">
    <property type="entry name" value="E3 ubiquitin-protein ligase CBL"/>
    <property type="match status" value="1"/>
</dbReference>
<dbReference type="FunFam" id="1.10.8.10:FF:000037">
    <property type="entry name" value="E3 ubiquitin-protein ligase CBL-B isoform B"/>
    <property type="match status" value="1"/>
</dbReference>
<dbReference type="Gene3D" id="1.20.930.20">
    <property type="entry name" value="Adaptor protein Cbl, N-terminal domain"/>
    <property type="match status" value="1"/>
</dbReference>
<dbReference type="Gene3D" id="1.10.8.10">
    <property type="entry name" value="DNA helicase RuvA subunit, C-terminal domain"/>
    <property type="match status" value="1"/>
</dbReference>
<dbReference type="Gene3D" id="1.10.238.10">
    <property type="entry name" value="EF-hand"/>
    <property type="match status" value="1"/>
</dbReference>
<dbReference type="Gene3D" id="3.30.505.10">
    <property type="entry name" value="SH2 domain"/>
    <property type="match status" value="1"/>
</dbReference>
<dbReference type="Gene3D" id="3.30.40.10">
    <property type="entry name" value="Zinc/RING finger domain, C3HC4 (zinc finger)"/>
    <property type="match status" value="1"/>
</dbReference>
<dbReference type="InterPro" id="IPR024162">
    <property type="entry name" value="Adaptor_Cbl"/>
</dbReference>
<dbReference type="InterPro" id="IPR014741">
    <property type="entry name" value="Adaptor_Cbl_EF_hand-like"/>
</dbReference>
<dbReference type="InterPro" id="IPR036537">
    <property type="entry name" value="Adaptor_Cbl_N_dom_sf"/>
</dbReference>
<dbReference type="InterPro" id="IPR003153">
    <property type="entry name" value="Adaptor_Cbl_N_hlx"/>
</dbReference>
<dbReference type="InterPro" id="IPR014742">
    <property type="entry name" value="Adaptor_Cbl_SH2-like"/>
</dbReference>
<dbReference type="InterPro" id="IPR039520">
    <property type="entry name" value="CBL-B_RING-HC"/>
</dbReference>
<dbReference type="InterPro" id="IPR024159">
    <property type="entry name" value="Cbl_PTB"/>
</dbReference>
<dbReference type="InterPro" id="IPR011992">
    <property type="entry name" value="EF-hand-dom_pair"/>
</dbReference>
<dbReference type="InterPro" id="IPR036860">
    <property type="entry name" value="SH2_dom_sf"/>
</dbReference>
<dbReference type="InterPro" id="IPR015940">
    <property type="entry name" value="UBA"/>
</dbReference>
<dbReference type="InterPro" id="IPR018957">
    <property type="entry name" value="Znf_C3HC4_RING-type"/>
</dbReference>
<dbReference type="InterPro" id="IPR001841">
    <property type="entry name" value="Znf_RING"/>
</dbReference>
<dbReference type="InterPro" id="IPR013083">
    <property type="entry name" value="Znf_RING/FYVE/PHD"/>
</dbReference>
<dbReference type="InterPro" id="IPR017907">
    <property type="entry name" value="Znf_RING_CS"/>
</dbReference>
<dbReference type="PANTHER" id="PTHR23007">
    <property type="entry name" value="CBL"/>
    <property type="match status" value="1"/>
</dbReference>
<dbReference type="PANTHER" id="PTHR23007:SF3">
    <property type="entry name" value="E3 UBIQUITIN-PROTEIN LIGASE CBL-B"/>
    <property type="match status" value="1"/>
</dbReference>
<dbReference type="Pfam" id="PF02262">
    <property type="entry name" value="Cbl_N"/>
    <property type="match status" value="1"/>
</dbReference>
<dbReference type="Pfam" id="PF02761">
    <property type="entry name" value="Cbl_N2"/>
    <property type="match status" value="1"/>
</dbReference>
<dbReference type="Pfam" id="PF02762">
    <property type="entry name" value="Cbl_N3"/>
    <property type="match status" value="1"/>
</dbReference>
<dbReference type="Pfam" id="PF00097">
    <property type="entry name" value="zf-C3HC4"/>
    <property type="match status" value="1"/>
</dbReference>
<dbReference type="SMART" id="SM00184">
    <property type="entry name" value="RING"/>
    <property type="match status" value="1"/>
</dbReference>
<dbReference type="SMART" id="SM00165">
    <property type="entry name" value="UBA"/>
    <property type="match status" value="1"/>
</dbReference>
<dbReference type="SUPFAM" id="SSF47473">
    <property type="entry name" value="EF-hand"/>
    <property type="match status" value="1"/>
</dbReference>
<dbReference type="SUPFAM" id="SSF47668">
    <property type="entry name" value="N-terminal domain of cbl (N-cbl)"/>
    <property type="match status" value="1"/>
</dbReference>
<dbReference type="SUPFAM" id="SSF57850">
    <property type="entry name" value="RING/U-box"/>
    <property type="match status" value="1"/>
</dbReference>
<dbReference type="SUPFAM" id="SSF55550">
    <property type="entry name" value="SH2 domain"/>
    <property type="match status" value="1"/>
</dbReference>
<dbReference type="PROSITE" id="PS51506">
    <property type="entry name" value="CBL_PTB"/>
    <property type="match status" value="1"/>
</dbReference>
<dbReference type="PROSITE" id="PS50030">
    <property type="entry name" value="UBA"/>
    <property type="match status" value="1"/>
</dbReference>
<dbReference type="PROSITE" id="PS00518">
    <property type="entry name" value="ZF_RING_1"/>
    <property type="match status" value="1"/>
</dbReference>
<dbReference type="PROSITE" id="PS50089">
    <property type="entry name" value="ZF_RING_2"/>
    <property type="match status" value="1"/>
</dbReference>
<protein>
    <recommendedName>
        <fullName>E3 ubiquitin-protein ligase CBL-B</fullName>
        <ecNumber evidence="3">2.3.2.27</ecNumber>
    </recommendedName>
    <alternativeName>
        <fullName>Casitas B-lineage lymphoma proto-oncogene b</fullName>
    </alternativeName>
    <alternativeName>
        <fullName evidence="11">RING-type E3 ubiquitin transferase CBL-B</fullName>
    </alternativeName>
    <alternativeName>
        <fullName>SH3-binding protein CBL-B</fullName>
    </alternativeName>
    <alternativeName>
        <fullName>Signal transduction protein CBL-B</fullName>
    </alternativeName>
</protein>
<proteinExistence type="evidence at protein level"/>
<keyword id="KW-0106">Calcium</keyword>
<keyword id="KW-0963">Cytoplasm</keyword>
<keyword id="KW-0219">Diabetes mellitus</keyword>
<keyword id="KW-0479">Metal-binding</keyword>
<keyword id="KW-0597">Phosphoprotein</keyword>
<keyword id="KW-1185">Reference proteome</keyword>
<keyword id="KW-0677">Repeat</keyword>
<keyword id="KW-0808">Transferase</keyword>
<keyword id="KW-0832">Ubl conjugation</keyword>
<keyword id="KW-0833">Ubl conjugation pathway</keyword>
<keyword id="KW-0862">Zinc</keyword>
<keyword id="KW-0863">Zinc-finger</keyword>
<feature type="chain" id="PRO_0000055862" description="E3 ubiquitin-protein ligase CBL-B">
    <location>
        <begin position="1"/>
        <end position="938"/>
    </location>
</feature>
<feature type="domain" description="Cbl-PTB" evidence="7">
    <location>
        <begin position="35"/>
        <end position="343"/>
    </location>
</feature>
<feature type="domain" description="UBA" evidence="6">
    <location>
        <begin position="887"/>
        <end position="926"/>
    </location>
</feature>
<feature type="zinc finger region" description="RING-type" evidence="5">
    <location>
        <begin position="373"/>
        <end position="412"/>
    </location>
</feature>
<feature type="region of interest" description="4H">
    <location>
        <begin position="35"/>
        <end position="167"/>
    </location>
</feature>
<feature type="region of interest" description="EF-hand-like">
    <location>
        <begin position="168"/>
        <end position="240"/>
    </location>
</feature>
<feature type="region of interest" description="SH2-like">
    <location>
        <begin position="241"/>
        <end position="343"/>
    </location>
</feature>
<feature type="region of interest" description="Linker">
    <location>
        <begin position="344"/>
        <end position="372"/>
    </location>
</feature>
<feature type="region of interest" description="Disordered" evidence="8">
    <location>
        <begin position="465"/>
        <end position="588"/>
    </location>
</feature>
<feature type="region of interest" description="Interaction with VAV1" evidence="1">
    <location>
        <begin position="543"/>
        <end position="567"/>
    </location>
</feature>
<feature type="region of interest" description="Disordered" evidence="8">
    <location>
        <begin position="702"/>
        <end position="725"/>
    </location>
</feature>
<feature type="region of interest" description="Disordered" evidence="8">
    <location>
        <begin position="771"/>
        <end position="885"/>
    </location>
</feature>
<feature type="region of interest" description="Interaction with SH3KBP1" evidence="1">
    <location>
        <begin position="847"/>
        <end position="883"/>
    </location>
</feature>
<feature type="compositionally biased region" description="Polar residues" evidence="8">
    <location>
        <begin position="473"/>
        <end position="486"/>
    </location>
</feature>
<feature type="compositionally biased region" description="Pro residues" evidence="8">
    <location>
        <begin position="544"/>
        <end position="566"/>
    </location>
</feature>
<feature type="compositionally biased region" description="Polar residues" evidence="8">
    <location>
        <begin position="714"/>
        <end position="724"/>
    </location>
</feature>
<feature type="compositionally biased region" description="Pro residues" evidence="8">
    <location>
        <begin position="775"/>
        <end position="784"/>
    </location>
</feature>
<feature type="compositionally biased region" description="Low complexity" evidence="8">
    <location>
        <begin position="794"/>
        <end position="804"/>
    </location>
</feature>
<feature type="compositionally biased region" description="Polar residues" evidence="8">
    <location>
        <begin position="839"/>
        <end position="855"/>
    </location>
</feature>
<feature type="compositionally biased region" description="Basic residues" evidence="8">
    <location>
        <begin position="862"/>
        <end position="878"/>
    </location>
</feature>
<feature type="binding site" evidence="2">
    <location>
        <position position="221"/>
    </location>
    <ligand>
        <name>Ca(2+)</name>
        <dbReference type="ChEBI" id="CHEBI:29108"/>
    </ligand>
</feature>
<feature type="binding site" evidence="2">
    <location>
        <position position="223"/>
    </location>
    <ligand>
        <name>Ca(2+)</name>
        <dbReference type="ChEBI" id="CHEBI:29108"/>
    </ligand>
</feature>
<feature type="binding site" evidence="2">
    <location>
        <position position="225"/>
    </location>
    <ligand>
        <name>Ca(2+)</name>
        <dbReference type="ChEBI" id="CHEBI:29108"/>
    </ligand>
</feature>
<feature type="binding site" evidence="2">
    <location>
        <position position="227"/>
    </location>
    <ligand>
        <name>Ca(2+)</name>
        <dbReference type="ChEBI" id="CHEBI:29108"/>
    </ligand>
</feature>
<feature type="binding site" evidence="2">
    <location>
        <position position="232"/>
    </location>
    <ligand>
        <name>Ca(2+)</name>
        <dbReference type="ChEBI" id="CHEBI:29108"/>
    </ligand>
</feature>
<feature type="binding site" evidence="1">
    <location>
        <position position="286"/>
    </location>
    <ligand>
        <name>4-O-phospho-L-tyrosine</name>
        <dbReference type="ChEBI" id="CHEBI:62338"/>
    </ligand>
</feature>
<feature type="modified residue" description="Phosphoserine; by PKC/PRKCQ" evidence="3">
    <location>
        <position position="282"/>
    </location>
</feature>
<feature type="modified residue" description="Phosphotyrosine" evidence="3">
    <location>
        <position position="363"/>
    </location>
</feature>
<feature type="modified residue" description="Phosphoserine" evidence="13">
    <location>
        <position position="476"/>
    </location>
</feature>
<feature type="modified residue" description="Phosphoserine" evidence="4">
    <location>
        <position position="480"/>
    </location>
</feature>
<feature type="modified residue" description="Phosphoserine" evidence="4">
    <location>
        <position position="484"/>
    </location>
</feature>
<feature type="modified residue" description="Phosphoserine" evidence="3">
    <location>
        <position position="521"/>
    </location>
</feature>
<feature type="modified residue" description="Phosphoserine" evidence="3">
    <location>
        <position position="525"/>
    </location>
</feature>
<feature type="modified residue" description="Phosphoserine" evidence="3">
    <location>
        <position position="529"/>
    </location>
</feature>
<feature type="modified residue" description="Phosphoserine" evidence="12">
    <location>
        <position position="633"/>
    </location>
</feature>
<feature type="modified residue" description="Phosphotyrosine" evidence="3">
    <location>
        <position position="664"/>
    </location>
</feature>
<feature type="modified residue" description="Phosphotyrosine" evidence="3">
    <location>
        <position position="708"/>
    </location>
</feature>
<feature type="modified residue" description="Phosphotyrosine" evidence="4">
    <location>
        <position position="845"/>
    </location>
</feature>